<feature type="chain" id="PRO_0000186079" description="Histone-lysine N-methyltransferase, H3 lysine-9 specific SUVH8">
    <location>
        <begin position="1"/>
        <end position="755"/>
    </location>
</feature>
<feature type="domain" description="YDG" evidence="5">
    <location>
        <begin position="310"/>
        <end position="448"/>
    </location>
</feature>
<feature type="domain" description="Pre-SET">
    <location>
        <begin position="528"/>
        <end position="578"/>
    </location>
</feature>
<feature type="domain" description="SET" evidence="4">
    <location>
        <begin position="581"/>
        <end position="723"/>
    </location>
</feature>
<feature type="domain" description="Post-SET" evidence="3">
    <location>
        <begin position="739"/>
        <end position="755"/>
    </location>
</feature>
<feature type="DNA-binding region" description="A.T hook">
    <location>
        <begin position="174"/>
        <end position="186"/>
    </location>
</feature>
<feature type="region of interest" description="Disordered" evidence="7">
    <location>
        <begin position="62"/>
        <end position="98"/>
    </location>
</feature>
<feature type="region of interest" description="Disordered" evidence="7">
    <location>
        <begin position="111"/>
        <end position="243"/>
    </location>
</feature>
<feature type="compositionally biased region" description="Basic and acidic residues" evidence="7">
    <location>
        <begin position="73"/>
        <end position="86"/>
    </location>
</feature>
<feature type="compositionally biased region" description="Basic and acidic residues" evidence="7">
    <location>
        <begin position="122"/>
        <end position="135"/>
    </location>
</feature>
<feature type="compositionally biased region" description="Basic residues" evidence="7">
    <location>
        <begin position="174"/>
        <end position="193"/>
    </location>
</feature>
<feature type="compositionally biased region" description="Polar residues" evidence="7">
    <location>
        <begin position="197"/>
        <end position="207"/>
    </location>
</feature>
<feature type="compositionally biased region" description="Basic residues" evidence="7">
    <location>
        <begin position="212"/>
        <end position="231"/>
    </location>
</feature>
<feature type="binding site" evidence="1">
    <location>
        <begin position="591"/>
        <end position="593"/>
    </location>
    <ligand>
        <name>S-adenosyl-L-methionine</name>
        <dbReference type="ChEBI" id="CHEBI:59789"/>
    </ligand>
</feature>
<feature type="binding site" evidence="4">
    <location>
        <position position="624"/>
    </location>
    <ligand>
        <name>S-adenosyl-L-methionine</name>
        <dbReference type="ChEBI" id="CHEBI:59789"/>
    </ligand>
</feature>
<feature type="binding site" evidence="4">
    <location>
        <position position="626"/>
    </location>
    <ligand>
        <name>S-adenosyl-L-methionine</name>
        <dbReference type="ChEBI" id="CHEBI:59789"/>
    </ligand>
</feature>
<feature type="binding site" evidence="4">
    <location>
        <position position="676"/>
    </location>
    <ligand>
        <name>S-adenosyl-L-methionine</name>
        <dbReference type="ChEBI" id="CHEBI:59789"/>
    </ligand>
</feature>
<feature type="binding site" evidence="1">
    <location>
        <begin position="679"/>
        <end position="680"/>
    </location>
    <ligand>
        <name>S-adenosyl-L-methionine</name>
        <dbReference type="ChEBI" id="CHEBI:59789"/>
    </ligand>
</feature>
<feature type="binding site" evidence="1">
    <location>
        <position position="682"/>
    </location>
    <ligand>
        <name>Zn(2+)</name>
        <dbReference type="ChEBI" id="CHEBI:29105"/>
    </ligand>
</feature>
<feature type="binding site" evidence="1">
    <location>
        <position position="743"/>
    </location>
    <ligand>
        <name>Zn(2+)</name>
        <dbReference type="ChEBI" id="CHEBI:29105"/>
    </ligand>
</feature>
<feature type="binding site" evidence="1">
    <location>
        <position position="745"/>
    </location>
    <ligand>
        <name>Zn(2+)</name>
        <dbReference type="ChEBI" id="CHEBI:29105"/>
    </ligand>
</feature>
<feature type="binding site" evidence="1">
    <location>
        <position position="750"/>
    </location>
    <ligand>
        <name>Zn(2+)</name>
        <dbReference type="ChEBI" id="CHEBI:29105"/>
    </ligand>
</feature>
<evidence type="ECO:0000250" key="1"/>
<evidence type="ECO:0000250" key="2">
    <source>
        <dbReference type="UniProtKB" id="Q8GZB6"/>
    </source>
</evidence>
<evidence type="ECO:0000255" key="3">
    <source>
        <dbReference type="PROSITE-ProRule" id="PRU00155"/>
    </source>
</evidence>
<evidence type="ECO:0000255" key="4">
    <source>
        <dbReference type="PROSITE-ProRule" id="PRU00190"/>
    </source>
</evidence>
<evidence type="ECO:0000255" key="5">
    <source>
        <dbReference type="PROSITE-ProRule" id="PRU00358"/>
    </source>
</evidence>
<evidence type="ECO:0000255" key="6">
    <source>
        <dbReference type="PROSITE-ProRule" id="PRU00908"/>
    </source>
</evidence>
<evidence type="ECO:0000256" key="7">
    <source>
        <dbReference type="SAM" id="MobiDB-lite"/>
    </source>
</evidence>
<evidence type="ECO:0000305" key="8"/>
<gene>
    <name type="primary">SUVH8</name>
    <name type="synonym">SDG21</name>
    <name type="synonym">SET21</name>
    <name type="ordered locus">At2g24740</name>
    <name type="ORF">F27A10.5</name>
</gene>
<sequence>MVSTPPTLLMLFDDGDAGPSTGLVHREKSDAVNEEAHATSVPPHAPPQTLWLLDNFNIEDSYDRDAGPSTGPVHRERSDAVNEEAHATSIPPHAPPQTLWLLDNFNIEDSYDRDAGPSTSPIDREASHEVNEDAHATSAPPHVMVSPLQNRRPFDQFNNQPYDASAGPSTGPGKRGRGRPKGSKNGSRKPKKPKAYDNNSTDASAGPSSGLGKRRCGRPKGLKNRSRKPKKPKADDPNSKMVISCPDFDSRITEAERESGNQEIVDSILMRFDAVRRRLCQLNYRKDKILTASTNCMNLGVRTNMTRRIGPIPGVQVGDIFYYWCEMCLVGLHRNTAGGIDSLLAKESGVDGPAATSVVTSGKYDNETEDLETLIYSGHGGKPCDQVLQRGNRALEASVRRRNEVRVIRGELYNNEKVYIYDGLYLVSDCWQVTGKSGFKEYRFKLLRKPGQPPGYAIWKLVENLRNHELIDPRQGFILGDLSFGEEGLRVPLVNEVDEEDKTIPDDFDYIRSQCYSGMTNDVNVDSQSLVQSYIHQNCTCILKNCGQLPYHDNILVCRKPLIYECGGSCPTRMVETGLKLHLEVFKTSNCGWGLRSWDPIRAGTFICEFTGVSKTKEEVEEDDDYLFDTSRIYHSFRWNYEPELLCEDACEQVSEDANLPTQVLISAKEKGNVGRFMNHNCWPNVFWQPIEYDDNNGHIYVRIGLFAMKHIPPMTELTYDYGISCVEKTGEDEVIYKGKKICLCGSVKCRGSFG</sequence>
<comment type="function">
    <text>Histone methyltransferase. Methylates 'Lys-9' of histone H3. H3 'Lys-9' methylation represents a specific tag for epigenetic transcriptional repression.</text>
</comment>
<comment type="catalytic activity">
    <reaction evidence="2">
        <text>N(6)-methyl-L-lysyl(9)-[histone H3] + S-adenosyl-L-methionine = N(6),N(6)-dimethyl-L-lysyl(9)-[histone H3] + S-adenosyl-L-homocysteine + H(+)</text>
        <dbReference type="Rhea" id="RHEA:60284"/>
        <dbReference type="Rhea" id="RHEA-COMP:15541"/>
        <dbReference type="Rhea" id="RHEA-COMP:15542"/>
        <dbReference type="ChEBI" id="CHEBI:15378"/>
        <dbReference type="ChEBI" id="CHEBI:57856"/>
        <dbReference type="ChEBI" id="CHEBI:59789"/>
        <dbReference type="ChEBI" id="CHEBI:61929"/>
        <dbReference type="ChEBI" id="CHEBI:61976"/>
    </reaction>
</comment>
<comment type="catalytic activity">
    <reaction evidence="2">
        <text>L-lysyl(9)-[histone H3] + S-adenosyl-L-methionine = N(6)-methyl-L-lysyl(9)-[histone H3] + S-adenosyl-L-homocysteine + H(+)</text>
        <dbReference type="Rhea" id="RHEA:60280"/>
        <dbReference type="Rhea" id="RHEA-COMP:15542"/>
        <dbReference type="Rhea" id="RHEA-COMP:15546"/>
        <dbReference type="ChEBI" id="CHEBI:15378"/>
        <dbReference type="ChEBI" id="CHEBI:29969"/>
        <dbReference type="ChEBI" id="CHEBI:57856"/>
        <dbReference type="ChEBI" id="CHEBI:59789"/>
        <dbReference type="ChEBI" id="CHEBI:61929"/>
        <dbReference type="EC" id="2.1.1.367"/>
    </reaction>
</comment>
<comment type="subcellular location">
    <subcellularLocation>
        <location evidence="5">Nucleus</location>
    </subcellularLocation>
    <subcellularLocation>
        <location evidence="1">Chromosome</location>
        <location evidence="1">Centromere</location>
    </subcellularLocation>
    <text evidence="1">Associates with centromeric constitutive heterochromatin.</text>
</comment>
<comment type="domain">
    <text>Although the SET domain contains the active site of enzymatic activity, both pre-SET and post-SET domains are required for methyltransferase activity.</text>
</comment>
<comment type="domain">
    <text>Cys residues in the pre-SET domain normally bind 3 zinc ions that are arranged in a triangular cluster, but here these Cys residues are only partially conserved, suggesting that the pre-Set domain may not bind a zinc cluster.</text>
</comment>
<comment type="similarity">
    <text evidence="6">Belongs to the class V-like SAM-binding methyltransferase superfamily. Histone-lysine methyltransferase family. Suvar3-9 subfamily.</text>
</comment>
<comment type="sequence caution" evidence="8">
    <conflict type="erroneous initiation">
        <sequence resource="EMBL-CDS" id="AAD26896"/>
    </conflict>
</comment>
<accession>Q9C5P0</accession>
<accession>Q9TP24</accession>
<reference key="1">
    <citation type="journal article" date="2001" name="Nucleic Acids Res.">
        <title>The Arabidopsis thaliana genome contains at least 29 active genes encoding SET domain proteins that can be assigned to four evolutionarily conserved classes.</title>
        <authorList>
            <person name="Baumbusch L.O."/>
            <person name="Thorstensen T."/>
            <person name="Krauss V."/>
            <person name="Fischer A."/>
            <person name="Naumann K."/>
            <person name="Assalkhou R."/>
            <person name="Schulz I."/>
            <person name="Reuter G."/>
            <person name="Aalen R.B."/>
        </authorList>
    </citation>
    <scope>NUCLEOTIDE SEQUENCE [GENOMIC DNA]</scope>
    <scope>NOMENCLATURE</scope>
</reference>
<reference key="2">
    <citation type="journal article" date="1999" name="Nature">
        <title>Sequence and analysis of chromosome 2 of the plant Arabidopsis thaliana.</title>
        <authorList>
            <person name="Lin X."/>
            <person name="Kaul S."/>
            <person name="Rounsley S.D."/>
            <person name="Shea T.P."/>
            <person name="Benito M.-I."/>
            <person name="Town C.D."/>
            <person name="Fujii C.Y."/>
            <person name="Mason T.M."/>
            <person name="Bowman C.L."/>
            <person name="Barnstead M.E."/>
            <person name="Feldblyum T.V."/>
            <person name="Buell C.R."/>
            <person name="Ketchum K.A."/>
            <person name="Lee J.J."/>
            <person name="Ronning C.M."/>
            <person name="Koo H.L."/>
            <person name="Moffat K.S."/>
            <person name="Cronin L.A."/>
            <person name="Shen M."/>
            <person name="Pai G."/>
            <person name="Van Aken S."/>
            <person name="Umayam L."/>
            <person name="Tallon L.J."/>
            <person name="Gill J.E."/>
            <person name="Adams M.D."/>
            <person name="Carrera A.J."/>
            <person name="Creasy T.H."/>
            <person name="Goodman H.M."/>
            <person name="Somerville C.R."/>
            <person name="Copenhaver G.P."/>
            <person name="Preuss D."/>
            <person name="Nierman W.C."/>
            <person name="White O."/>
            <person name="Eisen J.A."/>
            <person name="Salzberg S.L."/>
            <person name="Fraser C.M."/>
            <person name="Venter J.C."/>
        </authorList>
    </citation>
    <scope>NUCLEOTIDE SEQUENCE [LARGE SCALE GENOMIC DNA]</scope>
    <source>
        <strain>cv. Columbia</strain>
    </source>
</reference>
<reference key="3">
    <citation type="journal article" date="2017" name="Plant J.">
        <title>Araport11: a complete reannotation of the Arabidopsis thaliana reference genome.</title>
        <authorList>
            <person name="Cheng C.Y."/>
            <person name="Krishnakumar V."/>
            <person name="Chan A.P."/>
            <person name="Thibaud-Nissen F."/>
            <person name="Schobel S."/>
            <person name="Town C.D."/>
        </authorList>
    </citation>
    <scope>GENOME REANNOTATION</scope>
    <source>
        <strain>cv. Columbia</strain>
    </source>
</reference>
<reference key="4">
    <citation type="journal article" date="2006" name="J. Plant Physiol.">
        <title>Heterochromatin proteins and the control of heterochromatic gene silencing in Arabidopsis.</title>
        <authorList>
            <person name="Fischer A."/>
            <person name="Hofmann I."/>
            <person name="Naumann K."/>
            <person name="Reuter G."/>
        </authorList>
    </citation>
    <scope>GENE FAMILY</scope>
</reference>
<dbReference type="EC" id="2.1.1.-" evidence="2"/>
<dbReference type="EC" id="2.1.1.367" evidence="2"/>
<dbReference type="EMBL" id="AF344451">
    <property type="protein sequence ID" value="AAK28973.1"/>
    <property type="molecule type" value="Genomic_DNA"/>
</dbReference>
<dbReference type="EMBL" id="AC007266">
    <property type="protein sequence ID" value="AAD26896.1"/>
    <property type="status" value="ALT_INIT"/>
    <property type="molecule type" value="Genomic_DNA"/>
</dbReference>
<dbReference type="EMBL" id="CP002685">
    <property type="protein sequence ID" value="AEC07623.1"/>
    <property type="molecule type" value="Genomic_DNA"/>
</dbReference>
<dbReference type="PIR" id="C84640">
    <property type="entry name" value="C84640"/>
</dbReference>
<dbReference type="RefSeq" id="NP_180049.2">
    <property type="nucleotide sequence ID" value="NM_128034.2"/>
</dbReference>
<dbReference type="SMR" id="Q9C5P0"/>
<dbReference type="FunCoup" id="Q9C5P0">
    <property type="interactions" value="1"/>
</dbReference>
<dbReference type="STRING" id="3702.Q9C5P0"/>
<dbReference type="iPTMnet" id="Q9C5P0"/>
<dbReference type="PaxDb" id="3702-AT2G24740.1"/>
<dbReference type="EnsemblPlants" id="AT2G24740.1">
    <property type="protein sequence ID" value="AT2G24740.1"/>
    <property type="gene ID" value="AT2G24740"/>
</dbReference>
<dbReference type="GeneID" id="817010"/>
<dbReference type="Gramene" id="AT2G24740.1">
    <property type="protein sequence ID" value="AT2G24740.1"/>
    <property type="gene ID" value="AT2G24740"/>
</dbReference>
<dbReference type="KEGG" id="ath:AT2G24740"/>
<dbReference type="Araport" id="AT2G24740"/>
<dbReference type="TAIR" id="AT2G24740">
    <property type="gene designation" value="SDG21"/>
</dbReference>
<dbReference type="eggNOG" id="KOG1082">
    <property type="taxonomic scope" value="Eukaryota"/>
</dbReference>
<dbReference type="HOGENOM" id="CLU_004556_2_1_1"/>
<dbReference type="InParanoid" id="Q9C5P0"/>
<dbReference type="OMA" id="MTRRIGP"/>
<dbReference type="PhylomeDB" id="Q9C5P0"/>
<dbReference type="PRO" id="PR:Q9C5P0"/>
<dbReference type="Proteomes" id="UP000006548">
    <property type="component" value="Chromosome 2"/>
</dbReference>
<dbReference type="ExpressionAtlas" id="Q9C5P0">
    <property type="expression patterns" value="baseline and differential"/>
</dbReference>
<dbReference type="GO" id="GO:0000775">
    <property type="term" value="C:chromosome, centromeric region"/>
    <property type="evidence" value="ECO:0007669"/>
    <property type="project" value="UniProtKB-SubCell"/>
</dbReference>
<dbReference type="GO" id="GO:0005634">
    <property type="term" value="C:nucleus"/>
    <property type="evidence" value="ECO:0007669"/>
    <property type="project" value="UniProtKB-SubCell"/>
</dbReference>
<dbReference type="GO" id="GO:0003677">
    <property type="term" value="F:DNA binding"/>
    <property type="evidence" value="ECO:0007669"/>
    <property type="project" value="UniProtKB-KW"/>
</dbReference>
<dbReference type="GO" id="GO:0140947">
    <property type="term" value="F:histone H3K9me2 methyltransferase activity"/>
    <property type="evidence" value="ECO:0007669"/>
    <property type="project" value="RHEA"/>
</dbReference>
<dbReference type="GO" id="GO:0042054">
    <property type="term" value="F:histone methyltransferase activity"/>
    <property type="evidence" value="ECO:0000250"/>
    <property type="project" value="TAIR"/>
</dbReference>
<dbReference type="GO" id="GO:0008270">
    <property type="term" value="F:zinc ion binding"/>
    <property type="evidence" value="ECO:0007669"/>
    <property type="project" value="InterPro"/>
</dbReference>
<dbReference type="GO" id="GO:0040029">
    <property type="term" value="P:epigenetic regulation of gene expression"/>
    <property type="evidence" value="ECO:0000304"/>
    <property type="project" value="TAIR"/>
</dbReference>
<dbReference type="GO" id="GO:0048366">
    <property type="term" value="P:leaf development"/>
    <property type="evidence" value="ECO:0000315"/>
    <property type="project" value="TAIR"/>
</dbReference>
<dbReference type="GO" id="GO:0032259">
    <property type="term" value="P:methylation"/>
    <property type="evidence" value="ECO:0007669"/>
    <property type="project" value="UniProtKB-KW"/>
</dbReference>
<dbReference type="GO" id="GO:0008361">
    <property type="term" value="P:regulation of cell size"/>
    <property type="evidence" value="ECO:0000315"/>
    <property type="project" value="TAIR"/>
</dbReference>
<dbReference type="Gene3D" id="2.170.270.10">
    <property type="entry name" value="SET domain"/>
    <property type="match status" value="1"/>
</dbReference>
<dbReference type="Gene3D" id="2.30.280.10">
    <property type="entry name" value="SRA-YDG"/>
    <property type="match status" value="1"/>
</dbReference>
<dbReference type="InterPro" id="IPR025794">
    <property type="entry name" value="H3-K9-MeTrfase_plant"/>
</dbReference>
<dbReference type="InterPro" id="IPR051357">
    <property type="entry name" value="H3K9_HMTase_SUVAR3-9"/>
</dbReference>
<dbReference type="InterPro" id="IPR003616">
    <property type="entry name" value="Post-SET_dom"/>
</dbReference>
<dbReference type="InterPro" id="IPR007728">
    <property type="entry name" value="Pre-SET_dom"/>
</dbReference>
<dbReference type="InterPro" id="IPR015947">
    <property type="entry name" value="PUA-like_sf"/>
</dbReference>
<dbReference type="InterPro" id="IPR001214">
    <property type="entry name" value="SET_dom"/>
</dbReference>
<dbReference type="InterPro" id="IPR046341">
    <property type="entry name" value="SET_dom_sf"/>
</dbReference>
<dbReference type="InterPro" id="IPR036987">
    <property type="entry name" value="SRA-YDG_sf"/>
</dbReference>
<dbReference type="InterPro" id="IPR003105">
    <property type="entry name" value="SRA_YDG"/>
</dbReference>
<dbReference type="PANTHER" id="PTHR45660">
    <property type="entry name" value="HISTONE-LYSINE N-METHYLTRANSFERASE SETMAR"/>
    <property type="match status" value="1"/>
</dbReference>
<dbReference type="PANTHER" id="PTHR45660:SF18">
    <property type="entry name" value="HISTONE-LYSINE N-METHYLTRANSFERASE, H3 LYSINE-9 SPECIFIC SUVH7-RELATED"/>
    <property type="match status" value="1"/>
</dbReference>
<dbReference type="Pfam" id="PF05033">
    <property type="entry name" value="Pre-SET"/>
    <property type="match status" value="1"/>
</dbReference>
<dbReference type="Pfam" id="PF02182">
    <property type="entry name" value="SAD_SRA"/>
    <property type="match status" value="1"/>
</dbReference>
<dbReference type="Pfam" id="PF00856">
    <property type="entry name" value="SET"/>
    <property type="match status" value="1"/>
</dbReference>
<dbReference type="SMART" id="SM00468">
    <property type="entry name" value="PreSET"/>
    <property type="match status" value="1"/>
</dbReference>
<dbReference type="SMART" id="SM00317">
    <property type="entry name" value="SET"/>
    <property type="match status" value="1"/>
</dbReference>
<dbReference type="SMART" id="SM00466">
    <property type="entry name" value="SRA"/>
    <property type="match status" value="1"/>
</dbReference>
<dbReference type="SUPFAM" id="SSF88697">
    <property type="entry name" value="PUA domain-like"/>
    <property type="match status" value="1"/>
</dbReference>
<dbReference type="SUPFAM" id="SSF82199">
    <property type="entry name" value="SET domain"/>
    <property type="match status" value="1"/>
</dbReference>
<dbReference type="PROSITE" id="PS50868">
    <property type="entry name" value="POST_SET"/>
    <property type="match status" value="1"/>
</dbReference>
<dbReference type="PROSITE" id="PS51575">
    <property type="entry name" value="SAM_MT43_SUVAR39_2"/>
    <property type="match status" value="1"/>
</dbReference>
<dbReference type="PROSITE" id="PS50280">
    <property type="entry name" value="SET"/>
    <property type="match status" value="1"/>
</dbReference>
<dbReference type="PROSITE" id="PS51015">
    <property type="entry name" value="YDG"/>
    <property type="match status" value="1"/>
</dbReference>
<keyword id="KW-0137">Centromere</keyword>
<keyword id="KW-0156">Chromatin regulator</keyword>
<keyword id="KW-0158">Chromosome</keyword>
<keyword id="KW-0238">DNA-binding</keyword>
<keyword id="KW-0479">Metal-binding</keyword>
<keyword id="KW-0489">Methyltransferase</keyword>
<keyword id="KW-0539">Nucleus</keyword>
<keyword id="KW-1185">Reference proteome</keyword>
<keyword id="KW-0949">S-adenosyl-L-methionine</keyword>
<keyword id="KW-0808">Transferase</keyword>
<keyword id="KW-0862">Zinc</keyword>
<proteinExistence type="inferred from homology"/>
<organism>
    <name type="scientific">Arabidopsis thaliana</name>
    <name type="common">Mouse-ear cress</name>
    <dbReference type="NCBI Taxonomy" id="3702"/>
    <lineage>
        <taxon>Eukaryota</taxon>
        <taxon>Viridiplantae</taxon>
        <taxon>Streptophyta</taxon>
        <taxon>Embryophyta</taxon>
        <taxon>Tracheophyta</taxon>
        <taxon>Spermatophyta</taxon>
        <taxon>Magnoliopsida</taxon>
        <taxon>eudicotyledons</taxon>
        <taxon>Gunneridae</taxon>
        <taxon>Pentapetalae</taxon>
        <taxon>rosids</taxon>
        <taxon>malvids</taxon>
        <taxon>Brassicales</taxon>
        <taxon>Brassicaceae</taxon>
        <taxon>Camelineae</taxon>
        <taxon>Arabidopsis</taxon>
    </lineage>
</organism>
<name>SUVH8_ARATH</name>
<protein>
    <recommendedName>
        <fullName>Histone-lysine N-methyltransferase, H3 lysine-9 specific SUVH8</fullName>
        <ecNumber evidence="2">2.1.1.-</ecNumber>
        <ecNumber evidence="2">2.1.1.367</ecNumber>
    </recommendedName>
    <alternativeName>
        <fullName>Histone H3-K9 methyltransferase 8</fullName>
        <shortName>H3-K9-HMTase 8</shortName>
    </alternativeName>
    <alternativeName>
        <fullName>Protein SET DOMAIN GROUP 21</fullName>
    </alternativeName>
    <alternativeName>
        <fullName>Suppressor of variegation 3-9 homolog protein 8</fullName>
        <shortName>Su(var)3-9 homolog protein 8</shortName>
    </alternativeName>
</protein>